<dbReference type="EMBL" id="AF391091">
    <property type="protein sequence ID" value="AAK76989.1"/>
    <property type="molecule type" value="mRNA"/>
</dbReference>
<dbReference type="SMR" id="Q963B7"/>
<dbReference type="EnsemblMetazoa" id="XM_035603048.2">
    <property type="protein sequence ID" value="XP_035458941.1"/>
    <property type="gene ID" value="LOC118282119"/>
</dbReference>
<dbReference type="EnsemblMetazoa" id="XM_035603049.2">
    <property type="protein sequence ID" value="XP_035458942.1"/>
    <property type="gene ID" value="LOC118282119"/>
</dbReference>
<dbReference type="OrthoDB" id="10252633at2759"/>
<dbReference type="Proteomes" id="UP000829999">
    <property type="component" value="Unplaced"/>
</dbReference>
<dbReference type="GO" id="GO:0022625">
    <property type="term" value="C:cytosolic large ribosomal subunit"/>
    <property type="evidence" value="ECO:0007669"/>
    <property type="project" value="TreeGrafter"/>
</dbReference>
<dbReference type="GO" id="GO:0019843">
    <property type="term" value="F:rRNA binding"/>
    <property type="evidence" value="ECO:0007669"/>
    <property type="project" value="InterPro"/>
</dbReference>
<dbReference type="GO" id="GO:0003735">
    <property type="term" value="F:structural constituent of ribosome"/>
    <property type="evidence" value="ECO:0007669"/>
    <property type="project" value="InterPro"/>
</dbReference>
<dbReference type="GO" id="GO:0002181">
    <property type="term" value="P:cytoplasmic translation"/>
    <property type="evidence" value="ECO:0007669"/>
    <property type="project" value="TreeGrafter"/>
</dbReference>
<dbReference type="FunFam" id="3.90.930.12:FF:000003">
    <property type="entry name" value="60S ribosomal protein L9"/>
    <property type="match status" value="1"/>
</dbReference>
<dbReference type="FunFam" id="3.90.930.12:FF:000004">
    <property type="entry name" value="60S ribosomal protein L9"/>
    <property type="match status" value="1"/>
</dbReference>
<dbReference type="Gene3D" id="3.90.930.12">
    <property type="entry name" value="Ribosomal protein L6, alpha-beta domain"/>
    <property type="match status" value="2"/>
</dbReference>
<dbReference type="InterPro" id="IPR000702">
    <property type="entry name" value="Ribosomal_uL6-like"/>
</dbReference>
<dbReference type="InterPro" id="IPR036789">
    <property type="entry name" value="Ribosomal_uL6-like_a/b-dom_sf"/>
</dbReference>
<dbReference type="InterPro" id="IPR020040">
    <property type="entry name" value="Ribosomal_uL6_a/b-dom"/>
</dbReference>
<dbReference type="InterPro" id="IPR002359">
    <property type="entry name" value="Ribosomal_uL6_CS2"/>
</dbReference>
<dbReference type="PANTHER" id="PTHR11655:SF16">
    <property type="entry name" value="60S RIBOSOMAL PROTEIN L9"/>
    <property type="match status" value="1"/>
</dbReference>
<dbReference type="PANTHER" id="PTHR11655">
    <property type="entry name" value="60S/50S RIBOSOMAL PROTEIN L6/L9"/>
    <property type="match status" value="1"/>
</dbReference>
<dbReference type="Pfam" id="PF00347">
    <property type="entry name" value="Ribosomal_L6"/>
    <property type="match status" value="2"/>
</dbReference>
<dbReference type="PIRSF" id="PIRSF002162">
    <property type="entry name" value="Ribosomal_L6"/>
    <property type="match status" value="1"/>
</dbReference>
<dbReference type="SUPFAM" id="SSF56053">
    <property type="entry name" value="Ribosomal protein L6"/>
    <property type="match status" value="2"/>
</dbReference>
<dbReference type="PROSITE" id="PS00700">
    <property type="entry name" value="RIBOSOMAL_L6_2"/>
    <property type="match status" value="1"/>
</dbReference>
<keyword id="KW-0687">Ribonucleoprotein</keyword>
<keyword id="KW-0689">Ribosomal protein</keyword>
<feature type="chain" id="PRO_0000131103" description="Large ribosomal subunit protein uL6">
    <location>
        <begin position="1"/>
        <end position="190"/>
    </location>
</feature>
<proteinExistence type="evidence at transcript level"/>
<name>RL9_SPOFR</name>
<gene>
    <name type="primary">RpL9</name>
</gene>
<accession>Q963B7</accession>
<sequence>MKQIVANQKVKIPEGLTVHVKSRLVTVKGPRGVLKRNFKHLAVDIRMVNPRVLKVEKWFGSKKELAAVRTVCSHVENMIKGVTKGFQYKMRSVYAHFPINCVTTEGNSVIEIRNFLGEKYIRRVKMAPGVTVVNSPKQKDELIIEGNSLEDVSSSAALIQQSTTVKNKDIRKFLDGLYVSEKTTVEVDEI</sequence>
<protein>
    <recommendedName>
        <fullName evidence="1">Large ribosomal subunit protein uL6</fullName>
    </recommendedName>
    <alternativeName>
        <fullName>60S ribosomal protein L9</fullName>
    </alternativeName>
</protein>
<reference key="1">
    <citation type="journal article" date="2003" name="Bioinformatics">
        <title>Annotation pattern of ESTs from Spodoptera frugiperda Sf9 cells and analysis of the ribosomal protein genes reveal insect-specific features and unexpectedly low codon usage bias.</title>
        <authorList>
            <person name="Landais I."/>
            <person name="Ogliastro M."/>
            <person name="Mita K."/>
            <person name="Nohata J."/>
            <person name="Lopez-Ferber M."/>
            <person name="Duonor-Cerutti M."/>
            <person name="Shimada T."/>
            <person name="Fournier P."/>
            <person name="Devauchelle G."/>
        </authorList>
    </citation>
    <scope>NUCLEOTIDE SEQUENCE [LARGE SCALE MRNA]</scope>
</reference>
<comment type="similarity">
    <text evidence="1">Belongs to the universal ribosomal protein uL6 family.</text>
</comment>
<organism>
    <name type="scientific">Spodoptera frugiperda</name>
    <name type="common">Fall armyworm</name>
    <dbReference type="NCBI Taxonomy" id="7108"/>
    <lineage>
        <taxon>Eukaryota</taxon>
        <taxon>Metazoa</taxon>
        <taxon>Ecdysozoa</taxon>
        <taxon>Arthropoda</taxon>
        <taxon>Hexapoda</taxon>
        <taxon>Insecta</taxon>
        <taxon>Pterygota</taxon>
        <taxon>Neoptera</taxon>
        <taxon>Endopterygota</taxon>
        <taxon>Lepidoptera</taxon>
        <taxon>Glossata</taxon>
        <taxon>Ditrysia</taxon>
        <taxon>Noctuoidea</taxon>
        <taxon>Noctuidae</taxon>
        <taxon>Amphipyrinae</taxon>
        <taxon>Spodoptera</taxon>
    </lineage>
</organism>
<evidence type="ECO:0000305" key="1"/>